<evidence type="ECO:0000255" key="1">
    <source>
        <dbReference type="HAMAP-Rule" id="MF_00131"/>
    </source>
</evidence>
<accession>Q6NDN5</accession>
<keyword id="KW-0028">Amino-acid biosynthesis</keyword>
<keyword id="KW-0057">Aromatic amino acid biosynthesis</keyword>
<keyword id="KW-0456">Lyase</keyword>
<keyword id="KW-0822">Tryptophan biosynthesis</keyword>
<gene>
    <name evidence="1" type="primary">trpA</name>
    <name type="ordered locus">RPA0070</name>
</gene>
<reference key="1">
    <citation type="journal article" date="2004" name="Nat. Biotechnol.">
        <title>Complete genome sequence of the metabolically versatile photosynthetic bacterium Rhodopseudomonas palustris.</title>
        <authorList>
            <person name="Larimer F.W."/>
            <person name="Chain P."/>
            <person name="Hauser L."/>
            <person name="Lamerdin J.E."/>
            <person name="Malfatti S."/>
            <person name="Do L."/>
            <person name="Land M.L."/>
            <person name="Pelletier D.A."/>
            <person name="Beatty J.T."/>
            <person name="Lang A.S."/>
            <person name="Tabita F.R."/>
            <person name="Gibson J.L."/>
            <person name="Hanson T.E."/>
            <person name="Bobst C."/>
            <person name="Torres y Torres J.L."/>
            <person name="Peres C."/>
            <person name="Harrison F.H."/>
            <person name="Gibson J."/>
            <person name="Harwood C.S."/>
        </authorList>
    </citation>
    <scope>NUCLEOTIDE SEQUENCE [LARGE SCALE GENOMIC DNA]</scope>
    <source>
        <strain>ATCC BAA-98 / CGA009</strain>
    </source>
</reference>
<sequence>MTTRIDTRFGELKQQGRPALVTFVMAGDPDLDTSLQILKVLPAAGADVIEIGMPFTDPMADGPAIQAAGLRALKAGTTLKKTLGLVRDFRATDNATPLVLMGYYNPIYIYGVDAFLADAKAAGVDGLIIVDLPPEEDEELCLPAMKAGLNFIRLATPTTDEKRLPAVLANTSGFVYYVSITGITGSASADASAVGAAVQRIKRHTNLPVCVGFGIRTPDAAQAIAAQANGAVVGSALIDALKASLNAEGRATKATVGAVADLVASLAAGVRGAKQAAE</sequence>
<feature type="chain" id="PRO_0000098834" description="Tryptophan synthase alpha chain">
    <location>
        <begin position="1"/>
        <end position="278"/>
    </location>
</feature>
<feature type="active site" description="Proton acceptor" evidence="1">
    <location>
        <position position="50"/>
    </location>
</feature>
<feature type="active site" description="Proton acceptor" evidence="1">
    <location>
        <position position="61"/>
    </location>
</feature>
<dbReference type="EC" id="4.2.1.20" evidence="1"/>
<dbReference type="EMBL" id="BX572593">
    <property type="protein sequence ID" value="CAE25514.1"/>
    <property type="molecule type" value="Genomic_DNA"/>
</dbReference>
<dbReference type="RefSeq" id="WP_011155641.1">
    <property type="nucleotide sequence ID" value="NZ_CP116810.1"/>
</dbReference>
<dbReference type="SMR" id="Q6NDN5"/>
<dbReference type="STRING" id="258594.RPA0070"/>
<dbReference type="GeneID" id="66891071"/>
<dbReference type="eggNOG" id="COG0159">
    <property type="taxonomic scope" value="Bacteria"/>
</dbReference>
<dbReference type="HOGENOM" id="CLU_016734_0_0_5"/>
<dbReference type="PhylomeDB" id="Q6NDN5"/>
<dbReference type="UniPathway" id="UPA00035">
    <property type="reaction ID" value="UER00044"/>
</dbReference>
<dbReference type="GO" id="GO:0005829">
    <property type="term" value="C:cytosol"/>
    <property type="evidence" value="ECO:0007669"/>
    <property type="project" value="TreeGrafter"/>
</dbReference>
<dbReference type="GO" id="GO:0004834">
    <property type="term" value="F:tryptophan synthase activity"/>
    <property type="evidence" value="ECO:0007669"/>
    <property type="project" value="UniProtKB-UniRule"/>
</dbReference>
<dbReference type="CDD" id="cd04724">
    <property type="entry name" value="Tryptophan_synthase_alpha"/>
    <property type="match status" value="1"/>
</dbReference>
<dbReference type="FunFam" id="3.20.20.70:FF:000037">
    <property type="entry name" value="Tryptophan synthase alpha chain"/>
    <property type="match status" value="1"/>
</dbReference>
<dbReference type="Gene3D" id="3.20.20.70">
    <property type="entry name" value="Aldolase class I"/>
    <property type="match status" value="1"/>
</dbReference>
<dbReference type="HAMAP" id="MF_00131">
    <property type="entry name" value="Trp_synth_alpha"/>
    <property type="match status" value="1"/>
</dbReference>
<dbReference type="InterPro" id="IPR013785">
    <property type="entry name" value="Aldolase_TIM"/>
</dbReference>
<dbReference type="InterPro" id="IPR011060">
    <property type="entry name" value="RibuloseP-bd_barrel"/>
</dbReference>
<dbReference type="InterPro" id="IPR018204">
    <property type="entry name" value="Trp_synthase_alpha_AS"/>
</dbReference>
<dbReference type="InterPro" id="IPR002028">
    <property type="entry name" value="Trp_synthase_suA"/>
</dbReference>
<dbReference type="NCBIfam" id="TIGR00262">
    <property type="entry name" value="trpA"/>
    <property type="match status" value="1"/>
</dbReference>
<dbReference type="PANTHER" id="PTHR43406:SF1">
    <property type="entry name" value="TRYPTOPHAN SYNTHASE ALPHA CHAIN, CHLOROPLASTIC"/>
    <property type="match status" value="1"/>
</dbReference>
<dbReference type="PANTHER" id="PTHR43406">
    <property type="entry name" value="TRYPTOPHAN SYNTHASE, ALPHA CHAIN"/>
    <property type="match status" value="1"/>
</dbReference>
<dbReference type="Pfam" id="PF00290">
    <property type="entry name" value="Trp_syntA"/>
    <property type="match status" value="1"/>
</dbReference>
<dbReference type="SUPFAM" id="SSF51366">
    <property type="entry name" value="Ribulose-phoshate binding barrel"/>
    <property type="match status" value="1"/>
</dbReference>
<dbReference type="PROSITE" id="PS00167">
    <property type="entry name" value="TRP_SYNTHASE_ALPHA"/>
    <property type="match status" value="1"/>
</dbReference>
<name>TRPA_RHOPA</name>
<comment type="function">
    <text evidence="1">The alpha subunit is responsible for the aldol cleavage of indoleglycerol phosphate to indole and glyceraldehyde 3-phosphate.</text>
</comment>
<comment type="catalytic activity">
    <reaction evidence="1">
        <text>(1S,2R)-1-C-(indol-3-yl)glycerol 3-phosphate + L-serine = D-glyceraldehyde 3-phosphate + L-tryptophan + H2O</text>
        <dbReference type="Rhea" id="RHEA:10532"/>
        <dbReference type="ChEBI" id="CHEBI:15377"/>
        <dbReference type="ChEBI" id="CHEBI:33384"/>
        <dbReference type="ChEBI" id="CHEBI:57912"/>
        <dbReference type="ChEBI" id="CHEBI:58866"/>
        <dbReference type="ChEBI" id="CHEBI:59776"/>
        <dbReference type="EC" id="4.2.1.20"/>
    </reaction>
</comment>
<comment type="pathway">
    <text evidence="1">Amino-acid biosynthesis; L-tryptophan biosynthesis; L-tryptophan from chorismate: step 5/5.</text>
</comment>
<comment type="subunit">
    <text evidence="1">Tetramer of two alpha and two beta chains.</text>
</comment>
<comment type="similarity">
    <text evidence="1">Belongs to the TrpA family.</text>
</comment>
<protein>
    <recommendedName>
        <fullName evidence="1">Tryptophan synthase alpha chain</fullName>
        <ecNumber evidence="1">4.2.1.20</ecNumber>
    </recommendedName>
</protein>
<proteinExistence type="inferred from homology"/>
<organism>
    <name type="scientific">Rhodopseudomonas palustris (strain ATCC BAA-98 / CGA009)</name>
    <dbReference type="NCBI Taxonomy" id="258594"/>
    <lineage>
        <taxon>Bacteria</taxon>
        <taxon>Pseudomonadati</taxon>
        <taxon>Pseudomonadota</taxon>
        <taxon>Alphaproteobacteria</taxon>
        <taxon>Hyphomicrobiales</taxon>
        <taxon>Nitrobacteraceae</taxon>
        <taxon>Rhodopseudomonas</taxon>
    </lineage>
</organism>